<comment type="function">
    <text evidence="1">Cell wall formation.</text>
</comment>
<comment type="catalytic activity">
    <reaction evidence="1">
        <text>UDP-N-acetyl-alpha-D-muramate + L-alanine + ATP = UDP-N-acetyl-alpha-D-muramoyl-L-alanine + ADP + phosphate + H(+)</text>
        <dbReference type="Rhea" id="RHEA:23372"/>
        <dbReference type="ChEBI" id="CHEBI:15378"/>
        <dbReference type="ChEBI" id="CHEBI:30616"/>
        <dbReference type="ChEBI" id="CHEBI:43474"/>
        <dbReference type="ChEBI" id="CHEBI:57972"/>
        <dbReference type="ChEBI" id="CHEBI:70757"/>
        <dbReference type="ChEBI" id="CHEBI:83898"/>
        <dbReference type="ChEBI" id="CHEBI:456216"/>
        <dbReference type="EC" id="6.3.2.8"/>
    </reaction>
</comment>
<comment type="pathway">
    <text evidence="1">Cell wall biogenesis; peptidoglycan biosynthesis.</text>
</comment>
<comment type="subcellular location">
    <subcellularLocation>
        <location evidence="1">Cytoplasm</location>
    </subcellularLocation>
</comment>
<comment type="similarity">
    <text evidence="1">Belongs to the MurCDEF family.</text>
</comment>
<reference key="1">
    <citation type="journal article" date="2009" name="J. Bacteriol.">
        <title>Genome sequences of three Agrobacterium biovars help elucidate the evolution of multichromosome genomes in bacteria.</title>
        <authorList>
            <person name="Slater S.C."/>
            <person name="Goldman B.S."/>
            <person name="Goodner B."/>
            <person name="Setubal J.C."/>
            <person name="Farrand S.K."/>
            <person name="Nester E.W."/>
            <person name="Burr T.J."/>
            <person name="Banta L."/>
            <person name="Dickerman A.W."/>
            <person name="Paulsen I."/>
            <person name="Otten L."/>
            <person name="Suen G."/>
            <person name="Welch R."/>
            <person name="Almeida N.F."/>
            <person name="Arnold F."/>
            <person name="Burton O.T."/>
            <person name="Du Z."/>
            <person name="Ewing A."/>
            <person name="Godsy E."/>
            <person name="Heisel S."/>
            <person name="Houmiel K.L."/>
            <person name="Jhaveri J."/>
            <person name="Lu J."/>
            <person name="Miller N.M."/>
            <person name="Norton S."/>
            <person name="Chen Q."/>
            <person name="Phoolcharoen W."/>
            <person name="Ohlin V."/>
            <person name="Ondrusek D."/>
            <person name="Pride N."/>
            <person name="Stricklin S.L."/>
            <person name="Sun J."/>
            <person name="Wheeler C."/>
            <person name="Wilson L."/>
            <person name="Zhu H."/>
            <person name="Wood D.W."/>
        </authorList>
    </citation>
    <scope>NUCLEOTIDE SEQUENCE [LARGE SCALE GENOMIC DNA]</scope>
    <source>
        <strain>ATCC BAA-846 / DSM 112012 / S4</strain>
    </source>
</reference>
<dbReference type="EC" id="6.3.2.8" evidence="1"/>
<dbReference type="EMBL" id="CP000633">
    <property type="protein sequence ID" value="ACM37083.1"/>
    <property type="molecule type" value="Genomic_DNA"/>
</dbReference>
<dbReference type="RefSeq" id="WP_015916504.1">
    <property type="nucleotide sequence ID" value="NC_011989.1"/>
</dbReference>
<dbReference type="SMR" id="B9JY53"/>
<dbReference type="STRING" id="311402.Avi_2890"/>
<dbReference type="KEGG" id="avi:Avi_2890"/>
<dbReference type="eggNOG" id="COG0773">
    <property type="taxonomic scope" value="Bacteria"/>
</dbReference>
<dbReference type="HOGENOM" id="CLU_028104_2_2_5"/>
<dbReference type="UniPathway" id="UPA00219"/>
<dbReference type="Proteomes" id="UP000001596">
    <property type="component" value="Chromosome 1"/>
</dbReference>
<dbReference type="GO" id="GO:0005737">
    <property type="term" value="C:cytoplasm"/>
    <property type="evidence" value="ECO:0007669"/>
    <property type="project" value="UniProtKB-SubCell"/>
</dbReference>
<dbReference type="GO" id="GO:0005524">
    <property type="term" value="F:ATP binding"/>
    <property type="evidence" value="ECO:0007669"/>
    <property type="project" value="UniProtKB-UniRule"/>
</dbReference>
<dbReference type="GO" id="GO:0008763">
    <property type="term" value="F:UDP-N-acetylmuramate-L-alanine ligase activity"/>
    <property type="evidence" value="ECO:0007669"/>
    <property type="project" value="UniProtKB-UniRule"/>
</dbReference>
<dbReference type="GO" id="GO:0051301">
    <property type="term" value="P:cell division"/>
    <property type="evidence" value="ECO:0007669"/>
    <property type="project" value="UniProtKB-KW"/>
</dbReference>
<dbReference type="GO" id="GO:0071555">
    <property type="term" value="P:cell wall organization"/>
    <property type="evidence" value="ECO:0007669"/>
    <property type="project" value="UniProtKB-KW"/>
</dbReference>
<dbReference type="GO" id="GO:0009252">
    <property type="term" value="P:peptidoglycan biosynthetic process"/>
    <property type="evidence" value="ECO:0007669"/>
    <property type="project" value="UniProtKB-UniRule"/>
</dbReference>
<dbReference type="GO" id="GO:0008360">
    <property type="term" value="P:regulation of cell shape"/>
    <property type="evidence" value="ECO:0007669"/>
    <property type="project" value="UniProtKB-KW"/>
</dbReference>
<dbReference type="Gene3D" id="3.90.190.20">
    <property type="entry name" value="Mur ligase, C-terminal domain"/>
    <property type="match status" value="1"/>
</dbReference>
<dbReference type="Gene3D" id="3.40.1190.10">
    <property type="entry name" value="Mur-like, catalytic domain"/>
    <property type="match status" value="1"/>
</dbReference>
<dbReference type="Gene3D" id="3.40.50.720">
    <property type="entry name" value="NAD(P)-binding Rossmann-like Domain"/>
    <property type="match status" value="1"/>
</dbReference>
<dbReference type="HAMAP" id="MF_00046">
    <property type="entry name" value="MurC"/>
    <property type="match status" value="1"/>
</dbReference>
<dbReference type="InterPro" id="IPR036565">
    <property type="entry name" value="Mur-like_cat_sf"/>
</dbReference>
<dbReference type="InterPro" id="IPR004101">
    <property type="entry name" value="Mur_ligase_C"/>
</dbReference>
<dbReference type="InterPro" id="IPR036615">
    <property type="entry name" value="Mur_ligase_C_dom_sf"/>
</dbReference>
<dbReference type="InterPro" id="IPR013221">
    <property type="entry name" value="Mur_ligase_cen"/>
</dbReference>
<dbReference type="InterPro" id="IPR000713">
    <property type="entry name" value="Mur_ligase_N"/>
</dbReference>
<dbReference type="InterPro" id="IPR050061">
    <property type="entry name" value="MurCDEF_pg_biosynth"/>
</dbReference>
<dbReference type="InterPro" id="IPR005758">
    <property type="entry name" value="UDP-N-AcMur_Ala_ligase_MurC"/>
</dbReference>
<dbReference type="NCBIfam" id="TIGR01082">
    <property type="entry name" value="murC"/>
    <property type="match status" value="1"/>
</dbReference>
<dbReference type="PANTHER" id="PTHR43445:SF3">
    <property type="entry name" value="UDP-N-ACETYLMURAMATE--L-ALANINE LIGASE"/>
    <property type="match status" value="1"/>
</dbReference>
<dbReference type="PANTHER" id="PTHR43445">
    <property type="entry name" value="UDP-N-ACETYLMURAMATE--L-ALANINE LIGASE-RELATED"/>
    <property type="match status" value="1"/>
</dbReference>
<dbReference type="Pfam" id="PF01225">
    <property type="entry name" value="Mur_ligase"/>
    <property type="match status" value="1"/>
</dbReference>
<dbReference type="Pfam" id="PF02875">
    <property type="entry name" value="Mur_ligase_C"/>
    <property type="match status" value="1"/>
</dbReference>
<dbReference type="Pfam" id="PF08245">
    <property type="entry name" value="Mur_ligase_M"/>
    <property type="match status" value="1"/>
</dbReference>
<dbReference type="SUPFAM" id="SSF51984">
    <property type="entry name" value="MurCD N-terminal domain"/>
    <property type="match status" value="1"/>
</dbReference>
<dbReference type="SUPFAM" id="SSF53623">
    <property type="entry name" value="MurD-like peptide ligases, catalytic domain"/>
    <property type="match status" value="1"/>
</dbReference>
<dbReference type="SUPFAM" id="SSF53244">
    <property type="entry name" value="MurD-like peptide ligases, peptide-binding domain"/>
    <property type="match status" value="1"/>
</dbReference>
<organism>
    <name type="scientific">Allorhizobium ampelinum (strain ATCC BAA-846 / DSM 112012 / S4)</name>
    <name type="common">Agrobacterium vitis (strain S4)</name>
    <dbReference type="NCBI Taxonomy" id="311402"/>
    <lineage>
        <taxon>Bacteria</taxon>
        <taxon>Pseudomonadati</taxon>
        <taxon>Pseudomonadota</taxon>
        <taxon>Alphaproteobacteria</taxon>
        <taxon>Hyphomicrobiales</taxon>
        <taxon>Rhizobiaceae</taxon>
        <taxon>Rhizobium/Agrobacterium group</taxon>
        <taxon>Allorhizobium</taxon>
        <taxon>Allorhizobium ampelinum</taxon>
    </lineage>
</organism>
<accession>B9JY53</accession>
<evidence type="ECO:0000255" key="1">
    <source>
        <dbReference type="HAMAP-Rule" id="MF_00046"/>
    </source>
</evidence>
<feature type="chain" id="PRO_1000192087" description="UDP-N-acetylmuramate--L-alanine ligase">
    <location>
        <begin position="1"/>
        <end position="471"/>
    </location>
</feature>
<feature type="binding site" evidence="1">
    <location>
        <begin position="114"/>
        <end position="120"/>
    </location>
    <ligand>
        <name>ATP</name>
        <dbReference type="ChEBI" id="CHEBI:30616"/>
    </ligand>
</feature>
<name>MURC_ALLAM</name>
<keyword id="KW-0067">ATP-binding</keyword>
<keyword id="KW-0131">Cell cycle</keyword>
<keyword id="KW-0132">Cell division</keyword>
<keyword id="KW-0133">Cell shape</keyword>
<keyword id="KW-0961">Cell wall biogenesis/degradation</keyword>
<keyword id="KW-0963">Cytoplasm</keyword>
<keyword id="KW-0436">Ligase</keyword>
<keyword id="KW-0547">Nucleotide-binding</keyword>
<keyword id="KW-0573">Peptidoglycan synthesis</keyword>
<keyword id="KW-1185">Reference proteome</keyword>
<proteinExistence type="inferred from homology"/>
<protein>
    <recommendedName>
        <fullName evidence="1">UDP-N-acetylmuramate--L-alanine ligase</fullName>
        <ecNumber evidence="1">6.3.2.8</ecNumber>
    </recommendedName>
    <alternativeName>
        <fullName evidence="1">UDP-N-acetylmuramoyl-L-alanine synthetase</fullName>
    </alternativeName>
</protein>
<sequence length="471" mass="51145">MKMPKSIGLVHFIGIGGIGMSGIAEVLHNLGHRVQGSDQAESANVQRLRAKGIEVFVGHKPENLGDAEVVVVSTAIKKSNPELVAAREKLLPVVRRAEMLAELMRFRNAIAIGGTHGKTTTTSMVAALLEAGQLDPTVINGGIINAYGTNARMGEGEWMVVEADESDGTFLKLPADVAVVTNIDPEHLDHYGNFDAVRAAFRQFVENVPFYGFGVMCLDHPEVQALVGRIEDRKVVTYGENPQADVRFFNVRNEGTKSIFDVEIRRRRTGRVFSFKDLTLPMPGRHNISNACAAIAVANRLDISEEAIRKGLSTFGGVKRRFTLTGTWNGVQVFDDYGHHPVEIKAVLKAARESCKGRIIAVHQPHRFSRLSSLFEDFANCFNDADSILLSPVYAAGEDPIEGIDSEALVSRIRSGGHRDVRYLASPDQLAGIISTIAQPGDFVVLLGAGNITQWAAALPSELQALSGKSE</sequence>
<gene>
    <name evidence="1" type="primary">murC</name>
    <name type="ordered locus">Avi_2890</name>
</gene>